<sequence length="452" mass="48549">MGRKKKKQLKPWCWYCNRDFDDEKILIQHQKAKHFKCHICHKKLYTGPGLAIHCMQVHKETIDAVPNAIPGRTDIELEIYGMEGIPEKDMEERRRILEQKTQVDGQKKKTNQDDSDYDDDDDTAPSTSFQQMQTQQAFMPTMGQPGIPGLPGAPGMPPGITSLMPAVPPLISGIPHVMAGMHPHGMMSMGGMMHPHRPGIPPMMAGLPPGVPPPGLRPGIPPVTQAQPALSQAVVSRLPVPSTSAPALQSVPKPLFPSAGQAQAHISGPVGTDFKPLNNIPATTAEHPKPTFPAYTQSTMSTTSTTNSTASKPSTSITSKPATLTTTSATSKLVHPDEDISLEEKRAQLPKYQRNLPRPGQAPISNMGSTAVGPLGAMMAPRPGLPPQQHGMRHPLPPHGQYGAPLQGMAGYHPGTMPPFGQGPPMVPPFQGGPPRPLMGIRPPVMSQGGRY</sequence>
<accession>Q7ZXV8</accession>
<feature type="chain" id="PRO_0000428734" description="BUB3-interacting and GLEBS motif-containing protein ZNF207">
    <location>
        <begin position="1"/>
        <end position="452"/>
    </location>
</feature>
<feature type="zinc finger region" description="C2H2-type 1">
    <location>
        <begin position="11"/>
        <end position="34"/>
    </location>
</feature>
<feature type="zinc finger region" description="C2H2-type 2">
    <location>
        <begin position="35"/>
        <end position="58"/>
    </location>
</feature>
<feature type="region of interest" description="Microtubule-binding region" evidence="1">
    <location>
        <begin position="1"/>
        <end position="92"/>
    </location>
</feature>
<feature type="region of interest" description="Disordered" evidence="2">
    <location>
        <begin position="99"/>
        <end position="131"/>
    </location>
</feature>
<feature type="region of interest" description="Disordered" evidence="2">
    <location>
        <begin position="298"/>
        <end position="330"/>
    </location>
</feature>
<feature type="region of interest" description="GLEBS" evidence="1">
    <location>
        <begin position="329"/>
        <end position="361"/>
    </location>
</feature>
<feature type="compositionally biased region" description="Acidic residues" evidence="2">
    <location>
        <begin position="113"/>
        <end position="123"/>
    </location>
</feature>
<feature type="mutagenesis site" description="In xBuGZ13S: Impaired coacervation; when associated with S-129; S-138; S-256; S-274; S-292; S-295; S-352; S-402; S-412; S-420; S-430 and S-452." evidence="4">
    <original>Y</original>
    <variation>S</variation>
    <location>
        <position position="117"/>
    </location>
</feature>
<feature type="mutagenesis site" description="In xBuGZ13S: Impaired coacervation; when associated with S-117; S-138; S-256; S-274; S-292; S-295; S-352; S-402; S-412; S-420; S-430 and S-452." evidence="4">
    <original>F</original>
    <variation>S</variation>
    <location>
        <position position="129"/>
    </location>
</feature>
<feature type="mutagenesis site" description="In xBuGZ13S: Impaired coacervation; when associated with S-117; S-129; S-256; S-274; S-292; S-295; S-352; S-402; S-412; S-420; S-430 and S-452." evidence="4">
    <original>F</original>
    <variation>S</variation>
    <location>
        <position position="138"/>
    </location>
</feature>
<feature type="mutagenesis site" description="In xBuGZ13S: Impaired coacervation; when associated with S-117; S-129; S-138; S-274; S-292; S-295; S-352; S-402; S-412; S-420; S-430 and S-452." evidence="4">
    <original>F</original>
    <variation>S</variation>
    <location>
        <position position="256"/>
    </location>
</feature>
<feature type="mutagenesis site" description="In xBuGZ13S: Impaired coacervation; when associated with S-117; S-129; S-138; S-256; S-292; S-295; S-352; S-402; S-412; S-420; S-430 and S-452." evidence="4">
    <original>F</original>
    <variation>S</variation>
    <location>
        <position position="274"/>
    </location>
</feature>
<feature type="mutagenesis site" description="In xBuGZ13S: Impaired coacervation; when associated with S-117; S-129; S-138; S-256; S-274; S-295; S-352; S-402; S-412; S-420; S-430 and S-452." evidence="4">
    <original>F</original>
    <variation>S</variation>
    <location>
        <position position="292"/>
    </location>
</feature>
<feature type="mutagenesis site" description="In xBuGZ13S: Impaired coacervation; when associated with S-117; S-129; S-138; S-256; S-274; S-292; S-352; S-402; S-412; S-420; S-430 and S-452." evidence="4">
    <original>Y</original>
    <variation>S</variation>
    <location>
        <position position="295"/>
    </location>
</feature>
<feature type="mutagenesis site" description="In xBuGZ13S: Impaired coacervation; when associated with S-117; S-129; S-138; S-256; S-274; S-292; S-295; S-402; S-412; S-420; S-430 and S-452." evidence="4">
    <original>Y</original>
    <variation>S</variation>
    <location>
        <position position="352"/>
    </location>
</feature>
<feature type="mutagenesis site" description="In xBuGZ13S: Impaired coacervation; when associated with S-117; S-129; S-138; S-256; S-274; S-292; S-295; S-352; S-412; S-420; S-430 and S-452." evidence="4">
    <original>Y</original>
    <variation>S</variation>
    <location>
        <position position="402"/>
    </location>
</feature>
<feature type="mutagenesis site" description="In xBuGZ13S: Impaired coacervation; when associated with S-117; S-129; S-138; S-256; S-274; S-292; S-295; S-352; S-402; S-420; S-430 and S-452." evidence="4">
    <original>Y</original>
    <variation>S</variation>
    <location>
        <position position="412"/>
    </location>
</feature>
<feature type="mutagenesis site" description="In xBuGZ13S: Impaired coacervation; when associated with S-117; S-129; S-138; S-256; S-274; S-292; S-295; S-352; S-402; S-412; S-430 and S-452." evidence="4">
    <original>F</original>
    <variation>S</variation>
    <location>
        <position position="420"/>
    </location>
</feature>
<feature type="mutagenesis site" description="In xBuGZ13S: Impaired coacervation; when associated with S-117; S-129; S-138; S-256; S-274; S-292; S-295; S-352; S-402; S-412; S-420 and S-452." evidence="4">
    <original>F</original>
    <variation>S</variation>
    <location>
        <position position="430"/>
    </location>
</feature>
<feature type="mutagenesis site" description="In xBuGZ13S: Impaired coacervation; when associated with S-117; S-129; S-138; S-256; S-274; S-292; S-295; S-352; S-402; S-412; S-420 and S-430." evidence="4">
    <original>Y</original>
    <variation>S</variation>
    <location>
        <position position="452"/>
    </location>
</feature>
<comment type="function">
    <text evidence="4">Kinetochore- and microtubule-binding protein that plays a key role in spindle assembly. Znf207/BuGZ is mainly composed of disordered low-complexity regions and undergoes phase transition or coacervation to form temperature-dependent liquid droplets. Coacervation promotes microtubule bundling and concentrates tubulin, promoting microtubule polymerization and assembly of spindle and spindle matrix by concentrating its building blocks.</text>
</comment>
<comment type="subunit">
    <text evidence="3">Interacts (via GLEBS region) with bub3.</text>
</comment>
<comment type="subcellular location">
    <subcellularLocation>
        <location evidence="1">Nucleus</location>
    </subcellularLocation>
    <subcellularLocation>
        <location evidence="1">Chromosome</location>
        <location evidence="1">Centromere</location>
        <location evidence="1">Kinetochore</location>
    </subcellularLocation>
    <subcellularLocation>
        <location evidence="4">Cytoplasm</location>
        <location evidence="4">Cytoskeleton</location>
        <location evidence="4">Spindle</location>
    </subcellularLocation>
    <text evidence="1">Localizes primarily to the nucleus in interphase, concentrates at kinetochores prior to nuclear envelope breakdown and during early prometaphase, and disappears from kinetochores upon microtubule-binding.</text>
</comment>
<comment type="domain">
    <text evidence="1">The GLEBS region mediates interaction with bub3.</text>
</comment>
<comment type="domain">
    <text evidence="4">Mainly composed of disordered low-complexity regions outside of the C2H2-type zinc fingers. Coacervation depends on hydrophobic and aromatic Phe and Tyr in the disordered low-complexity region, that may promote coacervation by forming intermolecular hydrophobic interactions.</text>
</comment>
<comment type="domain">
    <text evidence="1">The microtubule-binding region is required for efficient loading of bub3 onto kinetochores and proper mitosis.</text>
</comment>
<reference key="1">
    <citation type="submission" date="2003-01" db="EMBL/GenBank/DDBJ databases">
        <authorList>
            <consortium name="NIH - Xenopus Gene Collection (XGC) project"/>
        </authorList>
    </citation>
    <scope>NUCLEOTIDE SEQUENCE [LARGE SCALE MRNA]</scope>
    <source>
        <tissue>Embryo</tissue>
    </source>
</reference>
<reference key="2">
    <citation type="journal article" date="2014" name="Dev. Cell">
        <title>A microtubule-associated zinc finger protein, BuGZ, regulates mitotic chromosome alignment by ensuring Bub3 stability and kinetochore targeting.</title>
        <authorList>
            <person name="Jiang H."/>
            <person name="He X."/>
            <person name="Wang S."/>
            <person name="Jia J."/>
            <person name="Wan Y."/>
            <person name="Wang Y."/>
            <person name="Zeng R."/>
            <person name="Yates J. III"/>
            <person name="Zhu X."/>
            <person name="Zheng Y."/>
        </authorList>
    </citation>
    <scope>INTERACTION WITH BUB3</scope>
</reference>
<reference key="3">
    <citation type="journal article" date="2015" name="Cell">
        <title>Phase transition of spindle-associated protein regulate spindle apparatus assembly.</title>
        <authorList>
            <person name="Jiang H."/>
            <person name="Wang S."/>
            <person name="Huang Y."/>
            <person name="He X."/>
            <person name="Cui H."/>
            <person name="Zhu X."/>
            <person name="Zheng Y."/>
        </authorList>
    </citation>
    <scope>FUNCTION</scope>
    <scope>SUBCELLULAR LOCATION</scope>
    <scope>DOMAIN</scope>
    <scope>MUTAGENESIS OF TYR-117; PHE-129; PHE-138; PHE-256; PHE-274; PHE-292; TYR-295; TYR-352; TYR-402; TYR-412; PHE-420; PHE-430 AND TYR-452</scope>
</reference>
<dbReference type="EMBL" id="BC044099">
    <property type="protein sequence ID" value="AAH44099.1"/>
    <property type="molecule type" value="mRNA"/>
</dbReference>
<dbReference type="RefSeq" id="NP_001080324.1">
    <property type="nucleotide sequence ID" value="NM_001086855.1"/>
</dbReference>
<dbReference type="SMR" id="Q7ZXV8"/>
<dbReference type="DNASU" id="380016"/>
<dbReference type="GeneID" id="380016"/>
<dbReference type="KEGG" id="xla:380016"/>
<dbReference type="AGR" id="Xenbase:XB-GENE-997707"/>
<dbReference type="CTD" id="380016"/>
<dbReference type="Xenbase" id="XB-GENE-997707">
    <property type="gene designation" value="znf207.S"/>
</dbReference>
<dbReference type="OrthoDB" id="1306014at2759"/>
<dbReference type="CD-CODE" id="0F39F0A3">
    <property type="entry name" value="Spindle matrix"/>
</dbReference>
<dbReference type="CD-CODE" id="6D2E8C29">
    <property type="entry name" value="Synthetic Condensate 000196"/>
</dbReference>
<dbReference type="CD-CODE" id="7B3AF3B0">
    <property type="entry name" value="Centrosome"/>
</dbReference>
<dbReference type="CD-CODE" id="D47533BE">
    <property type="entry name" value="Synthetic Condensate 000286"/>
</dbReference>
<dbReference type="Proteomes" id="UP000186698">
    <property type="component" value="Chromosome 9_10S"/>
</dbReference>
<dbReference type="Bgee" id="380016">
    <property type="expression patterns" value="Expressed in gastrula and 19 other cell types or tissues"/>
</dbReference>
<dbReference type="GO" id="GO:0005737">
    <property type="term" value="C:cytoplasm"/>
    <property type="evidence" value="ECO:0007669"/>
    <property type="project" value="UniProtKB-KW"/>
</dbReference>
<dbReference type="GO" id="GO:0000776">
    <property type="term" value="C:kinetochore"/>
    <property type="evidence" value="ECO:0000250"/>
    <property type="project" value="UniProtKB"/>
</dbReference>
<dbReference type="GO" id="GO:0005874">
    <property type="term" value="C:microtubule"/>
    <property type="evidence" value="ECO:0007669"/>
    <property type="project" value="UniProtKB-KW"/>
</dbReference>
<dbReference type="GO" id="GO:0005634">
    <property type="term" value="C:nucleus"/>
    <property type="evidence" value="ECO:0000250"/>
    <property type="project" value="UniProtKB"/>
</dbReference>
<dbReference type="GO" id="GO:0005819">
    <property type="term" value="C:spindle"/>
    <property type="evidence" value="ECO:0007669"/>
    <property type="project" value="UniProtKB-SubCell"/>
</dbReference>
<dbReference type="GO" id="GO:1990047">
    <property type="term" value="C:spindle matrix"/>
    <property type="evidence" value="ECO:0000314"/>
    <property type="project" value="UniProtKB"/>
</dbReference>
<dbReference type="GO" id="GO:0008017">
    <property type="term" value="F:microtubule binding"/>
    <property type="evidence" value="ECO:0000314"/>
    <property type="project" value="UniProtKB"/>
</dbReference>
<dbReference type="GO" id="GO:0008270">
    <property type="term" value="F:zinc ion binding"/>
    <property type="evidence" value="ECO:0007669"/>
    <property type="project" value="UniProtKB-KW"/>
</dbReference>
<dbReference type="GO" id="GO:0008608">
    <property type="term" value="P:attachment of spindle microtubules to kinetochore"/>
    <property type="evidence" value="ECO:0000250"/>
    <property type="project" value="UniProtKB"/>
</dbReference>
<dbReference type="GO" id="GO:0051301">
    <property type="term" value="P:cell division"/>
    <property type="evidence" value="ECO:0007669"/>
    <property type="project" value="UniProtKB-KW"/>
</dbReference>
<dbReference type="GO" id="GO:0001578">
    <property type="term" value="P:microtubule bundle formation"/>
    <property type="evidence" value="ECO:0000314"/>
    <property type="project" value="UniProtKB"/>
</dbReference>
<dbReference type="GO" id="GO:0046785">
    <property type="term" value="P:microtubule polymerization"/>
    <property type="evidence" value="ECO:0000314"/>
    <property type="project" value="UniProtKB"/>
</dbReference>
<dbReference type="GO" id="GO:0000070">
    <property type="term" value="P:mitotic sister chromatid segregation"/>
    <property type="evidence" value="ECO:0000250"/>
    <property type="project" value="UniProtKB"/>
</dbReference>
<dbReference type="GO" id="GO:0090307">
    <property type="term" value="P:mitotic spindle assembly"/>
    <property type="evidence" value="ECO:0000314"/>
    <property type="project" value="UniProtKB"/>
</dbReference>
<dbReference type="GO" id="GO:0007094">
    <property type="term" value="P:mitotic spindle assembly checkpoint signaling"/>
    <property type="evidence" value="ECO:0000250"/>
    <property type="project" value="UniProtKB"/>
</dbReference>
<dbReference type="GO" id="GO:0050821">
    <property type="term" value="P:protein stabilization"/>
    <property type="evidence" value="ECO:0000250"/>
    <property type="project" value="UniProtKB"/>
</dbReference>
<dbReference type="GO" id="GO:0051983">
    <property type="term" value="P:regulation of chromosome segregation"/>
    <property type="evidence" value="ECO:0000250"/>
    <property type="project" value="UniProtKB"/>
</dbReference>
<dbReference type="CDD" id="cd20908">
    <property type="entry name" value="SUF4-like"/>
    <property type="match status" value="1"/>
</dbReference>
<dbReference type="InterPro" id="IPR013087">
    <property type="entry name" value="Znf_C2H2_type"/>
</dbReference>
<dbReference type="PANTHER" id="PTHR23215:SF0">
    <property type="entry name" value="BUB3-INTERACTING AND GLEBS MOTIF-CONTAINING PROTEIN ZNF207"/>
    <property type="match status" value="1"/>
</dbReference>
<dbReference type="PANTHER" id="PTHR23215">
    <property type="entry name" value="ZINC FINGER PROTEIN 207"/>
    <property type="match status" value="1"/>
</dbReference>
<dbReference type="SMART" id="SM00355">
    <property type="entry name" value="ZnF_C2H2"/>
    <property type="match status" value="2"/>
</dbReference>
<dbReference type="PROSITE" id="PS00028">
    <property type="entry name" value="ZINC_FINGER_C2H2_1"/>
    <property type="match status" value="2"/>
</dbReference>
<proteinExistence type="evidence at protein level"/>
<protein>
    <recommendedName>
        <fullName evidence="1">BUB3-interacting and GLEBS motif-containing protein ZNF207</fullName>
        <shortName evidence="1">BuGZ</shortName>
        <shortName evidence="5">xBuGZ</shortName>
    </recommendedName>
    <alternativeName>
        <fullName evidence="1">Zinc finger protein 207</fullName>
    </alternativeName>
</protein>
<evidence type="ECO:0000250" key="1">
    <source>
        <dbReference type="UniProtKB" id="O43670"/>
    </source>
</evidence>
<evidence type="ECO:0000256" key="2">
    <source>
        <dbReference type="SAM" id="MobiDB-lite"/>
    </source>
</evidence>
<evidence type="ECO:0000269" key="3">
    <source>
    </source>
</evidence>
<evidence type="ECO:0000269" key="4">
    <source>
    </source>
</evidence>
<evidence type="ECO:0000303" key="5">
    <source>
    </source>
</evidence>
<keyword id="KW-0131">Cell cycle</keyword>
<keyword id="KW-0132">Cell division</keyword>
<keyword id="KW-0137">Centromere</keyword>
<keyword id="KW-0158">Chromosome</keyword>
<keyword id="KW-0159">Chromosome partition</keyword>
<keyword id="KW-0963">Cytoplasm</keyword>
<keyword id="KW-0206">Cytoskeleton</keyword>
<keyword id="KW-0995">Kinetochore</keyword>
<keyword id="KW-0479">Metal-binding</keyword>
<keyword id="KW-0493">Microtubule</keyword>
<keyword id="KW-0498">Mitosis</keyword>
<keyword id="KW-0539">Nucleus</keyword>
<keyword id="KW-1185">Reference proteome</keyword>
<keyword id="KW-0677">Repeat</keyword>
<keyword id="KW-0862">Zinc</keyword>
<keyword id="KW-0863">Zinc-finger</keyword>
<name>ZN207_XENLA</name>
<organism>
    <name type="scientific">Xenopus laevis</name>
    <name type="common">African clawed frog</name>
    <dbReference type="NCBI Taxonomy" id="8355"/>
    <lineage>
        <taxon>Eukaryota</taxon>
        <taxon>Metazoa</taxon>
        <taxon>Chordata</taxon>
        <taxon>Craniata</taxon>
        <taxon>Vertebrata</taxon>
        <taxon>Euteleostomi</taxon>
        <taxon>Amphibia</taxon>
        <taxon>Batrachia</taxon>
        <taxon>Anura</taxon>
        <taxon>Pipoidea</taxon>
        <taxon>Pipidae</taxon>
        <taxon>Xenopodinae</taxon>
        <taxon>Xenopus</taxon>
        <taxon>Xenopus</taxon>
    </lineage>
</organism>
<gene>
    <name evidence="1" type="primary">znf207</name>
    <name evidence="1" type="synonym">bugz</name>
</gene>